<evidence type="ECO:0000255" key="1">
    <source>
        <dbReference type="HAMAP-Rule" id="MF_00101"/>
    </source>
</evidence>
<protein>
    <recommendedName>
        <fullName evidence="1">Holo-[acyl-carrier-protein] synthase</fullName>
        <shortName evidence="1">Holo-ACP synthase</shortName>
        <ecNumber evidence="1">2.7.8.7</ecNumber>
    </recommendedName>
    <alternativeName>
        <fullName evidence="1">4'-phosphopantetheinyl transferase AcpS</fullName>
    </alternativeName>
</protein>
<name>ACPS_BRADU</name>
<sequence>MIIGIGSDLIDITRVGKVIERHGERFLDRIFTAAERAKAERRAKNEKMVVATYAKRFAAKEACSKALGTGIRRGVWWRDMGVVNLPGGRPTMQLTGGALARLQALTPDGFEARIDVSITDDWPLAQAFVIISAVPLAKS</sequence>
<keyword id="KW-0963">Cytoplasm</keyword>
<keyword id="KW-0275">Fatty acid biosynthesis</keyword>
<keyword id="KW-0276">Fatty acid metabolism</keyword>
<keyword id="KW-0444">Lipid biosynthesis</keyword>
<keyword id="KW-0443">Lipid metabolism</keyword>
<keyword id="KW-0460">Magnesium</keyword>
<keyword id="KW-0479">Metal-binding</keyword>
<keyword id="KW-1185">Reference proteome</keyword>
<keyword id="KW-0808">Transferase</keyword>
<feature type="chain" id="PRO_0000175618" description="Holo-[acyl-carrier-protein] synthase">
    <location>
        <begin position="1"/>
        <end position="139"/>
    </location>
</feature>
<feature type="binding site" evidence="1">
    <location>
        <position position="8"/>
    </location>
    <ligand>
        <name>Mg(2+)</name>
        <dbReference type="ChEBI" id="CHEBI:18420"/>
    </ligand>
</feature>
<feature type="binding site" evidence="1">
    <location>
        <position position="61"/>
    </location>
    <ligand>
        <name>Mg(2+)</name>
        <dbReference type="ChEBI" id="CHEBI:18420"/>
    </ligand>
</feature>
<reference key="1">
    <citation type="journal article" date="1998" name="Mol. Gen. Genet.">
        <title>A second gene for type I signal peptidase in Bradyrhizobium japonicum, sipF, is located near genes involved in RNA processing and cell division.</title>
        <authorList>
            <person name="Bairl A."/>
            <person name="Mueller P."/>
        </authorList>
    </citation>
    <scope>NUCLEOTIDE SEQUENCE [GENOMIC DNA]</scope>
    <source>
        <strain>USDA 110spc4</strain>
    </source>
</reference>
<reference key="2">
    <citation type="journal article" date="2002" name="DNA Res.">
        <title>Complete genomic sequence of nitrogen-fixing symbiotic bacterium Bradyrhizobium japonicum USDA110.</title>
        <authorList>
            <person name="Kaneko T."/>
            <person name="Nakamura Y."/>
            <person name="Sato S."/>
            <person name="Minamisawa K."/>
            <person name="Uchiumi T."/>
            <person name="Sasamoto S."/>
            <person name="Watanabe A."/>
            <person name="Idesawa K."/>
            <person name="Iriguchi M."/>
            <person name="Kawashima K."/>
            <person name="Kohara M."/>
            <person name="Matsumoto M."/>
            <person name="Shimpo S."/>
            <person name="Tsuruoka H."/>
            <person name="Wada T."/>
            <person name="Yamada M."/>
            <person name="Tabata S."/>
        </authorList>
    </citation>
    <scope>NUCLEOTIDE SEQUENCE [LARGE SCALE GENOMIC DNA]</scope>
    <source>
        <strain>JCM 10833 / BCRC 13528 / IAM 13628 / NBRC 14792 / USDA 110</strain>
    </source>
</reference>
<dbReference type="EC" id="2.7.8.7" evidence="1"/>
<dbReference type="EMBL" id="AF065159">
    <property type="protein sequence ID" value="AAD02937.1"/>
    <property type="molecule type" value="Genomic_DNA"/>
</dbReference>
<dbReference type="EMBL" id="BA000040">
    <property type="protein sequence ID" value="BAC50328.1"/>
    <property type="molecule type" value="Genomic_DNA"/>
</dbReference>
<dbReference type="RefSeq" id="NP_771703.1">
    <property type="nucleotide sequence ID" value="NC_004463.1"/>
</dbReference>
<dbReference type="RefSeq" id="WP_011087824.1">
    <property type="nucleotide sequence ID" value="NC_004463.1"/>
</dbReference>
<dbReference type="SMR" id="O69159"/>
<dbReference type="FunCoup" id="O69159">
    <property type="interactions" value="210"/>
</dbReference>
<dbReference type="STRING" id="224911.AAV28_22685"/>
<dbReference type="EnsemblBacteria" id="BAC50328">
    <property type="protein sequence ID" value="BAC50328"/>
    <property type="gene ID" value="BAC50328"/>
</dbReference>
<dbReference type="GeneID" id="46492070"/>
<dbReference type="KEGG" id="bja:bll5063"/>
<dbReference type="PATRIC" id="fig|224911.44.peg.4931"/>
<dbReference type="eggNOG" id="COG0736">
    <property type="taxonomic scope" value="Bacteria"/>
</dbReference>
<dbReference type="HOGENOM" id="CLU_089696_0_2_5"/>
<dbReference type="InParanoid" id="O69159"/>
<dbReference type="OrthoDB" id="517356at2"/>
<dbReference type="PhylomeDB" id="O69159"/>
<dbReference type="Proteomes" id="UP000002526">
    <property type="component" value="Chromosome"/>
</dbReference>
<dbReference type="GO" id="GO:0005737">
    <property type="term" value="C:cytoplasm"/>
    <property type="evidence" value="ECO:0007669"/>
    <property type="project" value="UniProtKB-SubCell"/>
</dbReference>
<dbReference type="GO" id="GO:0008897">
    <property type="term" value="F:holo-[acyl-carrier-protein] synthase activity"/>
    <property type="evidence" value="ECO:0007669"/>
    <property type="project" value="UniProtKB-UniRule"/>
</dbReference>
<dbReference type="GO" id="GO:0000287">
    <property type="term" value="F:magnesium ion binding"/>
    <property type="evidence" value="ECO:0007669"/>
    <property type="project" value="UniProtKB-UniRule"/>
</dbReference>
<dbReference type="GO" id="GO:0006633">
    <property type="term" value="P:fatty acid biosynthetic process"/>
    <property type="evidence" value="ECO:0007669"/>
    <property type="project" value="UniProtKB-UniRule"/>
</dbReference>
<dbReference type="Gene3D" id="3.90.470.20">
    <property type="entry name" value="4'-phosphopantetheinyl transferase domain"/>
    <property type="match status" value="1"/>
</dbReference>
<dbReference type="HAMAP" id="MF_00101">
    <property type="entry name" value="AcpS"/>
    <property type="match status" value="1"/>
</dbReference>
<dbReference type="InterPro" id="IPR008278">
    <property type="entry name" value="4-PPantetheinyl_Trfase_dom"/>
</dbReference>
<dbReference type="InterPro" id="IPR037143">
    <property type="entry name" value="4-PPantetheinyl_Trfase_dom_sf"/>
</dbReference>
<dbReference type="InterPro" id="IPR002582">
    <property type="entry name" value="ACPS"/>
</dbReference>
<dbReference type="InterPro" id="IPR004568">
    <property type="entry name" value="Ppantetheine-prot_Trfase_dom"/>
</dbReference>
<dbReference type="NCBIfam" id="TIGR00516">
    <property type="entry name" value="acpS"/>
    <property type="match status" value="1"/>
</dbReference>
<dbReference type="NCBIfam" id="TIGR00556">
    <property type="entry name" value="pantethn_trn"/>
    <property type="match status" value="1"/>
</dbReference>
<dbReference type="Pfam" id="PF01648">
    <property type="entry name" value="ACPS"/>
    <property type="match status" value="1"/>
</dbReference>
<dbReference type="SUPFAM" id="SSF56214">
    <property type="entry name" value="4'-phosphopantetheinyl transferase"/>
    <property type="match status" value="1"/>
</dbReference>
<organism>
    <name type="scientific">Bradyrhizobium diazoefficiens (strain JCM 10833 / BCRC 13528 / IAM 13628 / NBRC 14792 / USDA 110)</name>
    <dbReference type="NCBI Taxonomy" id="224911"/>
    <lineage>
        <taxon>Bacteria</taxon>
        <taxon>Pseudomonadati</taxon>
        <taxon>Pseudomonadota</taxon>
        <taxon>Alphaproteobacteria</taxon>
        <taxon>Hyphomicrobiales</taxon>
        <taxon>Nitrobacteraceae</taxon>
        <taxon>Bradyrhizobium</taxon>
    </lineage>
</organism>
<comment type="function">
    <text evidence="1">Transfers the 4'-phosphopantetheine moiety from coenzyme A to a Ser of acyl-carrier-protein.</text>
</comment>
<comment type="catalytic activity">
    <reaction evidence="1">
        <text>apo-[ACP] + CoA = holo-[ACP] + adenosine 3',5'-bisphosphate + H(+)</text>
        <dbReference type="Rhea" id="RHEA:12068"/>
        <dbReference type="Rhea" id="RHEA-COMP:9685"/>
        <dbReference type="Rhea" id="RHEA-COMP:9690"/>
        <dbReference type="ChEBI" id="CHEBI:15378"/>
        <dbReference type="ChEBI" id="CHEBI:29999"/>
        <dbReference type="ChEBI" id="CHEBI:57287"/>
        <dbReference type="ChEBI" id="CHEBI:58343"/>
        <dbReference type="ChEBI" id="CHEBI:64479"/>
        <dbReference type="EC" id="2.7.8.7"/>
    </reaction>
</comment>
<comment type="cofactor">
    <cofactor evidence="1">
        <name>Mg(2+)</name>
        <dbReference type="ChEBI" id="CHEBI:18420"/>
    </cofactor>
</comment>
<comment type="subcellular location">
    <subcellularLocation>
        <location evidence="1">Cytoplasm</location>
    </subcellularLocation>
</comment>
<comment type="similarity">
    <text evidence="1">Belongs to the P-Pant transferase superfamily. AcpS family.</text>
</comment>
<accession>O69159</accession>
<proteinExistence type="inferred from homology"/>
<gene>
    <name evidence="1" type="primary">acpS</name>
    <name type="ordered locus">bll5063</name>
</gene>